<proteinExistence type="inferred from homology"/>
<reference key="1">
    <citation type="journal article" date="2005" name="Proc. Natl. Acad. Sci. U.S.A.">
        <title>The complete genome sequence of Mycobacterium avium subspecies paratuberculosis.</title>
        <authorList>
            <person name="Li L."/>
            <person name="Bannantine J.P."/>
            <person name="Zhang Q."/>
            <person name="Amonsin A."/>
            <person name="May B.J."/>
            <person name="Alt D."/>
            <person name="Banerji N."/>
            <person name="Kanjilal S."/>
            <person name="Kapur V."/>
        </authorList>
    </citation>
    <scope>NUCLEOTIDE SEQUENCE [LARGE SCALE GENOMIC DNA]</scope>
    <source>
        <strain>ATCC BAA-968 / K-10</strain>
    </source>
</reference>
<dbReference type="EC" id="7.1.1.9"/>
<dbReference type="EMBL" id="AE016958">
    <property type="protein sequence ID" value="AAS04249.1"/>
    <property type="molecule type" value="Genomic_DNA"/>
</dbReference>
<dbReference type="RefSeq" id="WP_003878139.1">
    <property type="nucleotide sequence ID" value="NZ_CP106873.1"/>
</dbReference>
<dbReference type="SMR" id="Q73YM3"/>
<dbReference type="STRING" id="262316.MAP_1932"/>
<dbReference type="KEGG" id="mpa:MAP_1932"/>
<dbReference type="PATRIC" id="fig|262316.17.peg.2049"/>
<dbReference type="eggNOG" id="COG1845">
    <property type="taxonomic scope" value="Bacteria"/>
</dbReference>
<dbReference type="HOGENOM" id="CLU_044071_1_1_11"/>
<dbReference type="Proteomes" id="UP000000580">
    <property type="component" value="Chromosome"/>
</dbReference>
<dbReference type="GO" id="GO:0005886">
    <property type="term" value="C:plasma membrane"/>
    <property type="evidence" value="ECO:0007669"/>
    <property type="project" value="UniProtKB-SubCell"/>
</dbReference>
<dbReference type="GO" id="GO:0004129">
    <property type="term" value="F:cytochrome-c oxidase activity"/>
    <property type="evidence" value="ECO:0007669"/>
    <property type="project" value="UniProtKB-EC"/>
</dbReference>
<dbReference type="GO" id="GO:0019646">
    <property type="term" value="P:aerobic electron transport chain"/>
    <property type="evidence" value="ECO:0007669"/>
    <property type="project" value="InterPro"/>
</dbReference>
<dbReference type="CDD" id="cd00386">
    <property type="entry name" value="Heme_Cu_Oxidase_III_like"/>
    <property type="match status" value="1"/>
</dbReference>
<dbReference type="FunFam" id="1.20.120.80:FF:000001">
    <property type="entry name" value="Cytochrome (Ubi)quinol oxidase subunit III"/>
    <property type="match status" value="1"/>
</dbReference>
<dbReference type="Gene3D" id="1.20.120.80">
    <property type="entry name" value="Cytochrome c oxidase, subunit III, four-helix bundle"/>
    <property type="match status" value="1"/>
</dbReference>
<dbReference type="InterPro" id="IPR024791">
    <property type="entry name" value="Cyt_c/ubiquinol_Oxase_su3"/>
</dbReference>
<dbReference type="InterPro" id="IPR000298">
    <property type="entry name" value="Cyt_c_oxidase-like_su3"/>
</dbReference>
<dbReference type="InterPro" id="IPR035973">
    <property type="entry name" value="Cyt_c_oxidase_su3-like_sf"/>
</dbReference>
<dbReference type="InterPro" id="IPR013833">
    <property type="entry name" value="Cyt_c_oxidase_su3_a-hlx"/>
</dbReference>
<dbReference type="PANTHER" id="PTHR11403:SF2">
    <property type="entry name" value="CYTOCHROME BO(3) UBIQUINOL OXIDASE SUBUNIT 3"/>
    <property type="match status" value="1"/>
</dbReference>
<dbReference type="PANTHER" id="PTHR11403">
    <property type="entry name" value="CYTOCHROME C OXIDASE SUBUNIT III"/>
    <property type="match status" value="1"/>
</dbReference>
<dbReference type="Pfam" id="PF00510">
    <property type="entry name" value="COX3"/>
    <property type="match status" value="1"/>
</dbReference>
<dbReference type="SUPFAM" id="SSF81452">
    <property type="entry name" value="Cytochrome c oxidase subunit III-like"/>
    <property type="match status" value="1"/>
</dbReference>
<dbReference type="PROSITE" id="PS50253">
    <property type="entry name" value="COX3"/>
    <property type="match status" value="1"/>
</dbReference>
<feature type="chain" id="PRO_0000183883" description="Probable cytochrome c oxidase subunit 3">
    <location>
        <begin position="1"/>
        <end position="203"/>
    </location>
</feature>
<feature type="transmembrane region" description="Helical" evidence="2">
    <location>
        <begin position="30"/>
        <end position="50"/>
    </location>
</feature>
<feature type="transmembrane region" description="Helical" evidence="2">
    <location>
        <begin position="70"/>
        <end position="90"/>
    </location>
</feature>
<feature type="transmembrane region" description="Helical" evidence="2">
    <location>
        <begin position="102"/>
        <end position="122"/>
    </location>
</feature>
<feature type="transmembrane region" description="Helical" evidence="2">
    <location>
        <begin position="142"/>
        <end position="162"/>
    </location>
</feature>
<feature type="transmembrane region" description="Helical" evidence="2">
    <location>
        <begin position="179"/>
        <end position="199"/>
    </location>
</feature>
<protein>
    <recommendedName>
        <fullName>Probable cytochrome c oxidase subunit 3</fullName>
        <ecNumber>7.1.1.9</ecNumber>
    </recommendedName>
    <alternativeName>
        <fullName>Cytochrome aa3 subunit 3</fullName>
    </alternativeName>
    <alternativeName>
        <fullName>Cytochrome c oxidase polypeptide III</fullName>
    </alternativeName>
</protein>
<sequence length="203" mass="22434">MTSAVGTSGTAITSRVHSLNRPNMVSVGTIVWLSSELMFFAGLFAMYFTARAQSGGKWPPPPTELNLYQAVPVTLVLIASSFTCQMGVFAAERGDVFGLRRWYVITFLMGLFFVLGQGYEYYHLMGHGTTIPGSAYGSVFYLATGFHDLHVTGGLVAFIFLLARTAMSKFTPAQATASIVVSYYWHFVDIVWIALFTVIYFIR</sequence>
<comment type="catalytic activity">
    <reaction>
        <text>4 Fe(II)-[cytochrome c] + O2 + 8 H(+)(in) = 4 Fe(III)-[cytochrome c] + 2 H2O + 4 H(+)(out)</text>
        <dbReference type="Rhea" id="RHEA:11436"/>
        <dbReference type="Rhea" id="RHEA-COMP:10350"/>
        <dbReference type="Rhea" id="RHEA-COMP:14399"/>
        <dbReference type="ChEBI" id="CHEBI:15377"/>
        <dbReference type="ChEBI" id="CHEBI:15378"/>
        <dbReference type="ChEBI" id="CHEBI:15379"/>
        <dbReference type="ChEBI" id="CHEBI:29033"/>
        <dbReference type="ChEBI" id="CHEBI:29034"/>
        <dbReference type="EC" id="7.1.1.9"/>
    </reaction>
</comment>
<comment type="subcellular location">
    <subcellularLocation>
        <location evidence="1">Cell membrane</location>
        <topology evidence="1">Multi-pass membrane protein</topology>
    </subcellularLocation>
</comment>
<comment type="similarity">
    <text evidence="3">Belongs to the cytochrome c oxidase subunit 3 family.</text>
</comment>
<keyword id="KW-1003">Cell membrane</keyword>
<keyword id="KW-0472">Membrane</keyword>
<keyword id="KW-1185">Reference proteome</keyword>
<keyword id="KW-1278">Translocase</keyword>
<keyword id="KW-0812">Transmembrane</keyword>
<keyword id="KW-1133">Transmembrane helix</keyword>
<gene>
    <name type="primary">ctaE</name>
    <name type="ordered locus">MAP_1932</name>
</gene>
<name>COX3_MYCPA</name>
<accession>Q73YM3</accession>
<organism>
    <name type="scientific">Mycolicibacterium paratuberculosis (strain ATCC BAA-968 / K-10)</name>
    <name type="common">Mycobacterium paratuberculosis</name>
    <dbReference type="NCBI Taxonomy" id="262316"/>
    <lineage>
        <taxon>Bacteria</taxon>
        <taxon>Bacillati</taxon>
        <taxon>Actinomycetota</taxon>
        <taxon>Actinomycetes</taxon>
        <taxon>Mycobacteriales</taxon>
        <taxon>Mycobacteriaceae</taxon>
        <taxon>Mycobacterium</taxon>
        <taxon>Mycobacterium avium complex (MAC)</taxon>
    </lineage>
</organism>
<evidence type="ECO:0000250" key="1"/>
<evidence type="ECO:0000255" key="2"/>
<evidence type="ECO:0000305" key="3"/>